<keyword id="KW-0238">DNA-binding</keyword>
<keyword id="KW-0408">Iron</keyword>
<keyword id="KW-0411">Iron-sulfur</keyword>
<keyword id="KW-0479">Metal-binding</keyword>
<keyword id="KW-0678">Repressor</keyword>
<keyword id="KW-0804">Transcription</keyword>
<keyword id="KW-0805">Transcription regulation</keyword>
<feature type="chain" id="PRO_1000201339" description="Probable [Fe-S]-dependent transcriptional repressor">
    <location>
        <begin position="1"/>
        <end position="85"/>
    </location>
</feature>
<feature type="binding site" evidence="1">
    <location>
        <position position="56"/>
    </location>
    <ligand>
        <name>iron-sulfur cluster</name>
        <dbReference type="ChEBI" id="CHEBI:30408"/>
    </ligand>
</feature>
<feature type="binding site" evidence="1">
    <location>
        <position position="61"/>
    </location>
    <ligand>
        <name>iron-sulfur cluster</name>
        <dbReference type="ChEBI" id="CHEBI:30408"/>
    </ligand>
</feature>
<feature type="binding site" evidence="1">
    <location>
        <position position="64"/>
    </location>
    <ligand>
        <name>iron-sulfur cluster</name>
        <dbReference type="ChEBI" id="CHEBI:30408"/>
    </ligand>
</feature>
<feature type="binding site" evidence="1">
    <location>
        <position position="71"/>
    </location>
    <ligand>
        <name>iron-sulfur cluster</name>
        <dbReference type="ChEBI" id="CHEBI:30408"/>
    </ligand>
</feature>
<evidence type="ECO:0000255" key="1">
    <source>
        <dbReference type="HAMAP-Rule" id="MF_01586"/>
    </source>
</evidence>
<proteinExistence type="inferred from homology"/>
<dbReference type="EMBL" id="CP001048">
    <property type="protein sequence ID" value="ACC90914.1"/>
    <property type="molecule type" value="Genomic_DNA"/>
</dbReference>
<dbReference type="RefSeq" id="WP_002208920.1">
    <property type="nucleotide sequence ID" value="NZ_CP009780.1"/>
</dbReference>
<dbReference type="SMR" id="B2K5V5"/>
<dbReference type="KEGG" id="ypb:YPTS_3965"/>
<dbReference type="PATRIC" id="fig|502801.10.peg.3430"/>
<dbReference type="GO" id="GO:0003677">
    <property type="term" value="F:DNA binding"/>
    <property type="evidence" value="ECO:0007669"/>
    <property type="project" value="UniProtKB-KW"/>
</dbReference>
<dbReference type="GO" id="GO:0005506">
    <property type="term" value="F:iron ion binding"/>
    <property type="evidence" value="ECO:0007669"/>
    <property type="project" value="UniProtKB-UniRule"/>
</dbReference>
<dbReference type="GO" id="GO:0051536">
    <property type="term" value="F:iron-sulfur cluster binding"/>
    <property type="evidence" value="ECO:0007669"/>
    <property type="project" value="UniProtKB-KW"/>
</dbReference>
<dbReference type="Gene3D" id="1.10.10.10">
    <property type="entry name" value="Winged helix-like DNA-binding domain superfamily/Winged helix DNA-binding domain"/>
    <property type="match status" value="1"/>
</dbReference>
<dbReference type="HAMAP" id="MF_01586">
    <property type="entry name" value="FeoC"/>
    <property type="match status" value="1"/>
</dbReference>
<dbReference type="InterPro" id="IPR023732">
    <property type="entry name" value="FeoC"/>
</dbReference>
<dbReference type="InterPro" id="IPR015102">
    <property type="entry name" value="Tscrpt_reg_HTH_FeoC"/>
</dbReference>
<dbReference type="InterPro" id="IPR036388">
    <property type="entry name" value="WH-like_DNA-bd_sf"/>
</dbReference>
<dbReference type="InterPro" id="IPR036390">
    <property type="entry name" value="WH_DNA-bd_sf"/>
</dbReference>
<dbReference type="Pfam" id="PF09012">
    <property type="entry name" value="FeoC"/>
    <property type="match status" value="1"/>
</dbReference>
<dbReference type="SUPFAM" id="SSF46785">
    <property type="entry name" value="Winged helix' DNA-binding domain"/>
    <property type="match status" value="1"/>
</dbReference>
<sequence length="85" mass="9232">MASLLQLRDAIALNGSAEASQLSRQLAIPLPLVNAMLEKLTAMGKIERIELDHSGCLTGSCKSCPEGHQHCNTVIYQLKEPHAHQ</sequence>
<protein>
    <recommendedName>
        <fullName evidence="1">Probable [Fe-S]-dependent transcriptional repressor</fullName>
    </recommendedName>
</protein>
<name>FEOC_YERPB</name>
<reference key="1">
    <citation type="submission" date="2008-04" db="EMBL/GenBank/DDBJ databases">
        <title>Complete sequence of Yersinia pseudotuberculosis PB1/+.</title>
        <authorList>
            <person name="Copeland A."/>
            <person name="Lucas S."/>
            <person name="Lapidus A."/>
            <person name="Glavina del Rio T."/>
            <person name="Dalin E."/>
            <person name="Tice H."/>
            <person name="Bruce D."/>
            <person name="Goodwin L."/>
            <person name="Pitluck S."/>
            <person name="Munk A.C."/>
            <person name="Brettin T."/>
            <person name="Detter J.C."/>
            <person name="Han C."/>
            <person name="Tapia R."/>
            <person name="Schmutz J."/>
            <person name="Larimer F."/>
            <person name="Land M."/>
            <person name="Hauser L."/>
            <person name="Challacombe J.F."/>
            <person name="Green L."/>
            <person name="Lindler L.E."/>
            <person name="Nikolich M.P."/>
            <person name="Richardson P."/>
        </authorList>
    </citation>
    <scope>NUCLEOTIDE SEQUENCE [LARGE SCALE GENOMIC DNA]</scope>
    <source>
        <strain>PB1/+</strain>
    </source>
</reference>
<accession>B2K5V5</accession>
<comment type="function">
    <text evidence="1">May function as a transcriptional regulator that controls feoABC expression.</text>
</comment>
<comment type="similarity">
    <text evidence="1">Belongs to the FeoC family.</text>
</comment>
<organism>
    <name type="scientific">Yersinia pseudotuberculosis serotype IB (strain PB1/+)</name>
    <dbReference type="NCBI Taxonomy" id="502801"/>
    <lineage>
        <taxon>Bacteria</taxon>
        <taxon>Pseudomonadati</taxon>
        <taxon>Pseudomonadota</taxon>
        <taxon>Gammaproteobacteria</taxon>
        <taxon>Enterobacterales</taxon>
        <taxon>Yersiniaceae</taxon>
        <taxon>Yersinia</taxon>
    </lineage>
</organism>
<gene>
    <name evidence="1" type="primary">feoC</name>
    <name type="ordered locus">YPTS_3965</name>
</gene>